<comment type="function">
    <text evidence="1">Part of the ABC transporter complex LsrABCD involved in autoinducer 2 (AI-2) import. Binds AI-2 and delivers it to the LsrC and LsrD permeases (By similarity).</text>
</comment>
<comment type="subunit">
    <text evidence="1">The complex is composed of two ATP-binding proteins (LsrA), two transmembrane proteins (LsrC and LsrD) and a solute-binding protein (LsrB).</text>
</comment>
<comment type="subcellular location">
    <subcellularLocation>
        <location evidence="3">Periplasm</location>
    </subcellularLocation>
</comment>
<comment type="similarity">
    <text evidence="3">Belongs to the bacterial solute-binding protein 2 family.</text>
</comment>
<protein>
    <recommendedName>
        <fullName>Autoinducer 2-binding protein LsrB</fullName>
        <shortName>AI-2-binding protein LsrB</shortName>
    </recommendedName>
</protein>
<keyword id="KW-0574">Periplasm</keyword>
<keyword id="KW-0732">Signal</keyword>
<dbReference type="EMBL" id="CP000647">
    <property type="protein sequence ID" value="ABR78899.1"/>
    <property type="molecule type" value="Genomic_DNA"/>
</dbReference>
<dbReference type="RefSeq" id="WP_015959041.1">
    <property type="nucleotide sequence ID" value="NC_009648.1"/>
</dbReference>
<dbReference type="SMR" id="A6TEB5"/>
<dbReference type="STRING" id="272620.KPN_03504"/>
<dbReference type="PaxDb" id="272620-KPN_03504"/>
<dbReference type="DNASU" id="5341471"/>
<dbReference type="EnsemblBacteria" id="ABR78899">
    <property type="protein sequence ID" value="ABR78899"/>
    <property type="gene ID" value="KPN_03504"/>
</dbReference>
<dbReference type="KEGG" id="kpn:KPN_03504"/>
<dbReference type="HOGENOM" id="CLU_037628_3_0_6"/>
<dbReference type="Proteomes" id="UP000000265">
    <property type="component" value="Chromosome"/>
</dbReference>
<dbReference type="GO" id="GO:0043190">
    <property type="term" value="C:ATP-binding cassette (ABC) transporter complex"/>
    <property type="evidence" value="ECO:0007669"/>
    <property type="project" value="InterPro"/>
</dbReference>
<dbReference type="GO" id="GO:0030288">
    <property type="term" value="C:outer membrane-bounded periplasmic space"/>
    <property type="evidence" value="ECO:0007669"/>
    <property type="project" value="TreeGrafter"/>
</dbReference>
<dbReference type="GO" id="GO:0030246">
    <property type="term" value="F:carbohydrate binding"/>
    <property type="evidence" value="ECO:0007669"/>
    <property type="project" value="TreeGrafter"/>
</dbReference>
<dbReference type="CDD" id="cd20003">
    <property type="entry name" value="PBP1_LsrB_Quorum_Sensing"/>
    <property type="match status" value="1"/>
</dbReference>
<dbReference type="Gene3D" id="3.40.50.2300">
    <property type="match status" value="2"/>
</dbReference>
<dbReference type="InterPro" id="IPR050555">
    <property type="entry name" value="Bact_Solute-Bind_Prot2"/>
</dbReference>
<dbReference type="InterPro" id="IPR030159">
    <property type="entry name" value="LsrB"/>
</dbReference>
<dbReference type="InterPro" id="IPR028082">
    <property type="entry name" value="Peripla_BP_I"/>
</dbReference>
<dbReference type="InterPro" id="IPR025997">
    <property type="entry name" value="SBP_2_dom"/>
</dbReference>
<dbReference type="NCBIfam" id="NF011937">
    <property type="entry name" value="PRK15408.1"/>
    <property type="match status" value="1"/>
</dbReference>
<dbReference type="PANTHER" id="PTHR30036:SF7">
    <property type="entry name" value="ABC TRANSPORTER PERIPLASMIC-BINDING PROTEIN YPHF"/>
    <property type="match status" value="1"/>
</dbReference>
<dbReference type="PANTHER" id="PTHR30036">
    <property type="entry name" value="D-XYLOSE-BINDING PERIPLASMIC PROTEIN"/>
    <property type="match status" value="1"/>
</dbReference>
<dbReference type="Pfam" id="PF13407">
    <property type="entry name" value="Peripla_BP_4"/>
    <property type="match status" value="1"/>
</dbReference>
<dbReference type="SUPFAM" id="SSF53822">
    <property type="entry name" value="Periplasmic binding protein-like I"/>
    <property type="match status" value="1"/>
</dbReference>
<evidence type="ECO:0000250" key="1"/>
<evidence type="ECO:0000255" key="2"/>
<evidence type="ECO:0000305" key="3"/>
<feature type="signal peptide" evidence="2">
    <location>
        <begin position="1"/>
        <end position="19"/>
    </location>
</feature>
<feature type="chain" id="PRO_0000351322" description="Autoinducer 2-binding protein LsrB">
    <location>
        <begin position="20"/>
        <end position="333"/>
    </location>
</feature>
<organism>
    <name type="scientific">Klebsiella pneumoniae subsp. pneumoniae (strain ATCC 700721 / MGH 78578)</name>
    <dbReference type="NCBI Taxonomy" id="272620"/>
    <lineage>
        <taxon>Bacteria</taxon>
        <taxon>Pseudomonadati</taxon>
        <taxon>Pseudomonadota</taxon>
        <taxon>Gammaproteobacteria</taxon>
        <taxon>Enterobacterales</taxon>
        <taxon>Enterobacteriaceae</taxon>
        <taxon>Klebsiella/Raoultella group</taxon>
        <taxon>Klebsiella</taxon>
        <taxon>Klebsiella pneumoniae complex</taxon>
    </lineage>
</organism>
<sequence>MKLKLIVLALTMSVVTAQAADRIAFIPKLVGVGFFTSGGNGAKEAGKALGVDVTYDGPTEPSVSGQVQLINNFVNQGYNAIIVSAVSPDGLCPALKRAMQRGVKVLTWDSDTKPECRSIYINQGTPQQLGGLLVEMAEKQVSKPAAKVAFFYSSPTVTDQNQWVKEAKAKIEKEHPQWQIVTTQFGYNDATKSLQTAEGILKAYPDLDAIIAPDANALPAAAQAAENLKRQGVAIVGFSTPNVMRPYVERGTVKAFGLWDVVKQGKIAVNVADRLLKKGDLNVGDSVEVKDIGSLKVEPNSVQGYQYEAKGNGIVLLPERVVFSKENINNYDF</sequence>
<reference key="1">
    <citation type="submission" date="2006-09" db="EMBL/GenBank/DDBJ databases">
        <authorList>
            <consortium name="The Klebsiella pneumonia Genome Sequencing Project"/>
            <person name="McClelland M."/>
            <person name="Sanderson E.K."/>
            <person name="Spieth J."/>
            <person name="Clifton W.S."/>
            <person name="Latreille P."/>
            <person name="Sabo A."/>
            <person name="Pepin K."/>
            <person name="Bhonagiri V."/>
            <person name="Porwollik S."/>
            <person name="Ali J."/>
            <person name="Wilson R.K."/>
        </authorList>
    </citation>
    <scope>NUCLEOTIDE SEQUENCE [LARGE SCALE GENOMIC DNA]</scope>
    <source>
        <strain>ATCC 700721 / MGH 78578</strain>
    </source>
</reference>
<proteinExistence type="inferred from homology"/>
<name>LSRB_KLEP7</name>
<gene>
    <name type="primary">lsrB</name>
    <name type="ordered locus">KPN78578_34750</name>
    <name type="ORF">KPN_03504</name>
</gene>
<accession>A6TEB5</accession>